<keyword id="KW-0028">Amino-acid biosynthesis</keyword>
<keyword id="KW-0057">Aromatic amino acid biosynthesis</keyword>
<keyword id="KW-0521">NADP</keyword>
<keyword id="KW-0560">Oxidoreductase</keyword>
<organism>
    <name type="scientific">Dehalococcoides mccartyi (strain ATCC BAA-2266 / KCTC 15142 / 195)</name>
    <name type="common">Dehalococcoides ethenogenes (strain 195)</name>
    <dbReference type="NCBI Taxonomy" id="243164"/>
    <lineage>
        <taxon>Bacteria</taxon>
        <taxon>Bacillati</taxon>
        <taxon>Chloroflexota</taxon>
        <taxon>Dehalococcoidia</taxon>
        <taxon>Dehalococcoidales</taxon>
        <taxon>Dehalococcoidaceae</taxon>
        <taxon>Dehalococcoides</taxon>
    </lineage>
</organism>
<sequence>MKTIPDALFGLIGFPVSHSVSPAMQNAAFKHCKLDYLYLTIAAKPEELQNVIASMGPLNIRGLNVTIPHKIEVIKYIDSLDPAAEKIGAVNTIVNENGRLKGYNTDFGGFVRLLEHNRIAPAKQRFTLLGAGGSAHAIALAVCNLGGHLTVLARQEEKAKDLAGKMCLRLSGKTQGLELNDTNLEEALADTDVIVNCTPVGMGNLAGQSLVPPRLLRPDLTVIDAIYNPCKTRLLEDAEKRGARIINGLEMLVWQGAMSFEIWTNQKAPFRLMMKEAELALDENKK</sequence>
<reference key="1">
    <citation type="journal article" date="2005" name="Science">
        <title>Genome sequence of the PCE-dechlorinating bacterium Dehalococcoides ethenogenes.</title>
        <authorList>
            <person name="Seshadri R."/>
            <person name="Adrian L."/>
            <person name="Fouts D.E."/>
            <person name="Eisen J.A."/>
            <person name="Phillippy A.M."/>
            <person name="Methe B.A."/>
            <person name="Ward N.L."/>
            <person name="Nelson W.C."/>
            <person name="DeBoy R.T."/>
            <person name="Khouri H.M."/>
            <person name="Kolonay J.F."/>
            <person name="Dodson R.J."/>
            <person name="Daugherty S.C."/>
            <person name="Brinkac L.M."/>
            <person name="Sullivan S.A."/>
            <person name="Madupu R."/>
            <person name="Nelson K.E."/>
            <person name="Kang K.H."/>
            <person name="Impraim M."/>
            <person name="Tran K."/>
            <person name="Robinson J.M."/>
            <person name="Forberger H.A."/>
            <person name="Fraser C.M."/>
            <person name="Zinder S.H."/>
            <person name="Heidelberg J.F."/>
        </authorList>
    </citation>
    <scope>NUCLEOTIDE SEQUENCE [LARGE SCALE GENOMIC DNA]</scope>
    <source>
        <strain>ATCC BAA-2266 / KCTC 15142 / 195</strain>
    </source>
</reference>
<dbReference type="EC" id="1.1.1.25" evidence="1"/>
<dbReference type="EMBL" id="CP000027">
    <property type="protein sequence ID" value="AAW40206.1"/>
    <property type="molecule type" value="Genomic_DNA"/>
</dbReference>
<dbReference type="RefSeq" id="WP_010936242.1">
    <property type="nucleotide sequence ID" value="NC_002936.3"/>
</dbReference>
<dbReference type="SMR" id="Q3Z990"/>
<dbReference type="FunCoup" id="Q3Z990">
    <property type="interactions" value="328"/>
</dbReference>
<dbReference type="STRING" id="243164.DET0465"/>
<dbReference type="GeneID" id="3230170"/>
<dbReference type="KEGG" id="det:DET0465"/>
<dbReference type="PATRIC" id="fig|243164.10.peg.443"/>
<dbReference type="eggNOG" id="COG0169">
    <property type="taxonomic scope" value="Bacteria"/>
</dbReference>
<dbReference type="HOGENOM" id="CLU_044063_4_1_0"/>
<dbReference type="InParanoid" id="Q3Z990"/>
<dbReference type="UniPathway" id="UPA00053">
    <property type="reaction ID" value="UER00087"/>
</dbReference>
<dbReference type="Proteomes" id="UP000008289">
    <property type="component" value="Chromosome"/>
</dbReference>
<dbReference type="GO" id="GO:0050661">
    <property type="term" value="F:NADP binding"/>
    <property type="evidence" value="ECO:0007669"/>
    <property type="project" value="InterPro"/>
</dbReference>
<dbReference type="GO" id="GO:0004764">
    <property type="term" value="F:shikimate 3-dehydrogenase (NADP+) activity"/>
    <property type="evidence" value="ECO:0007669"/>
    <property type="project" value="UniProtKB-UniRule"/>
</dbReference>
<dbReference type="GO" id="GO:0008652">
    <property type="term" value="P:amino acid biosynthetic process"/>
    <property type="evidence" value="ECO:0007669"/>
    <property type="project" value="UniProtKB-KW"/>
</dbReference>
<dbReference type="GO" id="GO:0009073">
    <property type="term" value="P:aromatic amino acid family biosynthetic process"/>
    <property type="evidence" value="ECO:0007669"/>
    <property type="project" value="UniProtKB-KW"/>
</dbReference>
<dbReference type="GO" id="GO:0009423">
    <property type="term" value="P:chorismate biosynthetic process"/>
    <property type="evidence" value="ECO:0007669"/>
    <property type="project" value="UniProtKB-UniRule"/>
</dbReference>
<dbReference type="GO" id="GO:0019632">
    <property type="term" value="P:shikimate metabolic process"/>
    <property type="evidence" value="ECO:0007669"/>
    <property type="project" value="InterPro"/>
</dbReference>
<dbReference type="CDD" id="cd01065">
    <property type="entry name" value="NAD_bind_Shikimate_DH"/>
    <property type="match status" value="1"/>
</dbReference>
<dbReference type="Gene3D" id="3.40.50.10860">
    <property type="entry name" value="Leucine Dehydrogenase, chain A, domain 1"/>
    <property type="match status" value="1"/>
</dbReference>
<dbReference type="Gene3D" id="3.40.50.720">
    <property type="entry name" value="NAD(P)-binding Rossmann-like Domain"/>
    <property type="match status" value="1"/>
</dbReference>
<dbReference type="HAMAP" id="MF_00222">
    <property type="entry name" value="Shikimate_DH_AroE"/>
    <property type="match status" value="1"/>
</dbReference>
<dbReference type="InterPro" id="IPR046346">
    <property type="entry name" value="Aminoacid_DH-like_N_sf"/>
</dbReference>
<dbReference type="InterPro" id="IPR036291">
    <property type="entry name" value="NAD(P)-bd_dom_sf"/>
</dbReference>
<dbReference type="InterPro" id="IPR041121">
    <property type="entry name" value="SDH_C"/>
</dbReference>
<dbReference type="InterPro" id="IPR011342">
    <property type="entry name" value="Shikimate_DH"/>
</dbReference>
<dbReference type="InterPro" id="IPR013708">
    <property type="entry name" value="Shikimate_DH-bd_N"/>
</dbReference>
<dbReference type="InterPro" id="IPR022893">
    <property type="entry name" value="Shikimate_DH_fam"/>
</dbReference>
<dbReference type="NCBIfam" id="TIGR00507">
    <property type="entry name" value="aroE"/>
    <property type="match status" value="1"/>
</dbReference>
<dbReference type="NCBIfam" id="NF001319">
    <property type="entry name" value="PRK00258.3-3"/>
    <property type="match status" value="1"/>
</dbReference>
<dbReference type="NCBIfam" id="NF001322">
    <property type="entry name" value="PRK00258.3-6"/>
    <property type="match status" value="1"/>
</dbReference>
<dbReference type="PANTHER" id="PTHR21089:SF1">
    <property type="entry name" value="BIFUNCTIONAL 3-DEHYDROQUINATE DEHYDRATASE_SHIKIMATE DEHYDROGENASE, CHLOROPLASTIC"/>
    <property type="match status" value="1"/>
</dbReference>
<dbReference type="PANTHER" id="PTHR21089">
    <property type="entry name" value="SHIKIMATE DEHYDROGENASE"/>
    <property type="match status" value="1"/>
</dbReference>
<dbReference type="Pfam" id="PF18317">
    <property type="entry name" value="SDH_C"/>
    <property type="match status" value="1"/>
</dbReference>
<dbReference type="Pfam" id="PF08501">
    <property type="entry name" value="Shikimate_dh_N"/>
    <property type="match status" value="1"/>
</dbReference>
<dbReference type="SUPFAM" id="SSF53223">
    <property type="entry name" value="Aminoacid dehydrogenase-like, N-terminal domain"/>
    <property type="match status" value="1"/>
</dbReference>
<dbReference type="SUPFAM" id="SSF51735">
    <property type="entry name" value="NAD(P)-binding Rossmann-fold domains"/>
    <property type="match status" value="1"/>
</dbReference>
<proteinExistence type="inferred from homology"/>
<name>AROE_DEHM1</name>
<accession>Q3Z990</accession>
<evidence type="ECO:0000255" key="1">
    <source>
        <dbReference type="HAMAP-Rule" id="MF_00222"/>
    </source>
</evidence>
<comment type="function">
    <text evidence="1">Involved in the biosynthesis of the chorismate, which leads to the biosynthesis of aromatic amino acids. Catalyzes the reversible NADPH linked reduction of 3-dehydroshikimate (DHSA) to yield shikimate (SA).</text>
</comment>
<comment type="catalytic activity">
    <reaction evidence="1">
        <text>shikimate + NADP(+) = 3-dehydroshikimate + NADPH + H(+)</text>
        <dbReference type="Rhea" id="RHEA:17737"/>
        <dbReference type="ChEBI" id="CHEBI:15378"/>
        <dbReference type="ChEBI" id="CHEBI:16630"/>
        <dbReference type="ChEBI" id="CHEBI:36208"/>
        <dbReference type="ChEBI" id="CHEBI:57783"/>
        <dbReference type="ChEBI" id="CHEBI:58349"/>
        <dbReference type="EC" id="1.1.1.25"/>
    </reaction>
</comment>
<comment type="pathway">
    <text evidence="1">Metabolic intermediate biosynthesis; chorismate biosynthesis; chorismate from D-erythrose 4-phosphate and phosphoenolpyruvate: step 4/7.</text>
</comment>
<comment type="subunit">
    <text evidence="1">Homodimer.</text>
</comment>
<comment type="similarity">
    <text evidence="1">Belongs to the shikimate dehydrogenase family.</text>
</comment>
<protein>
    <recommendedName>
        <fullName evidence="1">Shikimate dehydrogenase (NADP(+))</fullName>
        <shortName evidence="1">SDH</shortName>
        <ecNumber evidence="1">1.1.1.25</ecNumber>
    </recommendedName>
</protein>
<gene>
    <name evidence="1" type="primary">aroE</name>
    <name type="ordered locus">DET0465</name>
</gene>
<feature type="chain" id="PRO_1000058660" description="Shikimate dehydrogenase (NADP(+))">
    <location>
        <begin position="1"/>
        <end position="286"/>
    </location>
</feature>
<feature type="active site" description="Proton acceptor" evidence="1">
    <location>
        <position position="70"/>
    </location>
</feature>
<feature type="binding site" evidence="1">
    <location>
        <begin position="19"/>
        <end position="21"/>
    </location>
    <ligand>
        <name>shikimate</name>
        <dbReference type="ChEBI" id="CHEBI:36208"/>
    </ligand>
</feature>
<feature type="binding site" evidence="1">
    <location>
        <position position="66"/>
    </location>
    <ligand>
        <name>shikimate</name>
        <dbReference type="ChEBI" id="CHEBI:36208"/>
    </ligand>
</feature>
<feature type="binding site" evidence="1">
    <location>
        <position position="91"/>
    </location>
    <ligand>
        <name>shikimate</name>
        <dbReference type="ChEBI" id="CHEBI:36208"/>
    </ligand>
</feature>
<feature type="binding site" evidence="1">
    <location>
        <position position="106"/>
    </location>
    <ligand>
        <name>shikimate</name>
        <dbReference type="ChEBI" id="CHEBI:36208"/>
    </ligand>
</feature>
<feature type="binding site" evidence="1">
    <location>
        <begin position="130"/>
        <end position="134"/>
    </location>
    <ligand>
        <name>NADP(+)</name>
        <dbReference type="ChEBI" id="CHEBI:58349"/>
    </ligand>
</feature>
<feature type="binding site" evidence="1">
    <location>
        <position position="225"/>
    </location>
    <ligand>
        <name>NADP(+)</name>
        <dbReference type="ChEBI" id="CHEBI:58349"/>
    </ligand>
</feature>
<feature type="binding site" evidence="1">
    <location>
        <position position="227"/>
    </location>
    <ligand>
        <name>shikimate</name>
        <dbReference type="ChEBI" id="CHEBI:36208"/>
    </ligand>
</feature>
<feature type="binding site" evidence="1">
    <location>
        <position position="248"/>
    </location>
    <ligand>
        <name>NADP(+)</name>
        <dbReference type="ChEBI" id="CHEBI:58349"/>
    </ligand>
</feature>